<reference key="1">
    <citation type="submission" date="2006-01" db="EMBL/GenBank/DDBJ databases">
        <title>Complete sequence of Rhodopseudomonas palustris HaA2.</title>
        <authorList>
            <consortium name="US DOE Joint Genome Institute"/>
            <person name="Copeland A."/>
            <person name="Lucas S."/>
            <person name="Lapidus A."/>
            <person name="Barry K."/>
            <person name="Detter J.C."/>
            <person name="Glavina T."/>
            <person name="Hammon N."/>
            <person name="Israni S."/>
            <person name="Pitluck S."/>
            <person name="Chain P."/>
            <person name="Malfatti S."/>
            <person name="Shin M."/>
            <person name="Vergez L."/>
            <person name="Schmutz J."/>
            <person name="Larimer F."/>
            <person name="Land M."/>
            <person name="Hauser L."/>
            <person name="Pelletier D.A."/>
            <person name="Kyrpides N."/>
            <person name="Anderson I."/>
            <person name="Oda Y."/>
            <person name="Harwood C.S."/>
            <person name="Richardson P."/>
        </authorList>
    </citation>
    <scope>NUCLEOTIDE SEQUENCE [LARGE SCALE GENOMIC DNA]</scope>
    <source>
        <strain>HaA2</strain>
    </source>
</reference>
<evidence type="ECO:0000255" key="1">
    <source>
        <dbReference type="HAMAP-Rule" id="MF_01554"/>
    </source>
</evidence>
<name>GLMM_RHOP2</name>
<gene>
    <name evidence="1" type="primary">glmM</name>
    <name type="ordered locus">RPB_1307</name>
</gene>
<sequence length="450" mass="48611">MSRRYFGTDGIRGRANGLITPELALKVGQAAGLVFQRGDHRHRVVIGKDTRLSGYMIENAMVAGFTSVGMDVLLVGPMPTPAVAMLTKSMRADLGVMISASHNMFEDNGIKLFGPLGFKLSDDVEKQIEQLLDEPMDKKLSESASLGRARRIDGVHDRYIEFAKRTLPRDLSLDGLRVVVDCANGAAYKVVPEALWELGADVISIGVEPDGFNINKECGSTSPEALCRKVREMRADIGIALDGDADRVIMVDERGHVIDGDQLLAVIAQSWKEDGRLARPGIVATVMSNLGLERFLASEGIELVRTSVGDRYVLEAMLRDGYNVGGEASGHIILSDYATTGDGFVAALQILAVVQKLGRPVSEVCHRFDPLPQILKNVRYRAGRPLDDAGVQSAISDAEKRLNGHGRLLIRPSGTEPVIRVMGEGEDRIMVEEVVDTIVDALGNASAAAA</sequence>
<accession>Q2J0J3</accession>
<comment type="function">
    <text evidence="1">Catalyzes the conversion of glucosamine-6-phosphate to glucosamine-1-phosphate.</text>
</comment>
<comment type="catalytic activity">
    <reaction evidence="1">
        <text>alpha-D-glucosamine 1-phosphate = D-glucosamine 6-phosphate</text>
        <dbReference type="Rhea" id="RHEA:23424"/>
        <dbReference type="ChEBI" id="CHEBI:58516"/>
        <dbReference type="ChEBI" id="CHEBI:58725"/>
        <dbReference type="EC" id="5.4.2.10"/>
    </reaction>
</comment>
<comment type="cofactor">
    <cofactor evidence="1">
        <name>Mg(2+)</name>
        <dbReference type="ChEBI" id="CHEBI:18420"/>
    </cofactor>
    <text evidence="1">Binds 1 Mg(2+) ion per subunit.</text>
</comment>
<comment type="PTM">
    <text evidence="1">Activated by phosphorylation.</text>
</comment>
<comment type="similarity">
    <text evidence="1">Belongs to the phosphohexose mutase family.</text>
</comment>
<dbReference type="EC" id="5.4.2.10" evidence="1"/>
<dbReference type="EMBL" id="CP000250">
    <property type="protein sequence ID" value="ABD06017.1"/>
    <property type="molecule type" value="Genomic_DNA"/>
</dbReference>
<dbReference type="RefSeq" id="WP_011440205.1">
    <property type="nucleotide sequence ID" value="NC_007778.1"/>
</dbReference>
<dbReference type="SMR" id="Q2J0J3"/>
<dbReference type="STRING" id="316058.RPB_1307"/>
<dbReference type="KEGG" id="rpb:RPB_1307"/>
<dbReference type="eggNOG" id="COG1109">
    <property type="taxonomic scope" value="Bacteria"/>
</dbReference>
<dbReference type="HOGENOM" id="CLU_016950_7_0_5"/>
<dbReference type="OrthoDB" id="9803322at2"/>
<dbReference type="Proteomes" id="UP000008809">
    <property type="component" value="Chromosome"/>
</dbReference>
<dbReference type="GO" id="GO:0005829">
    <property type="term" value="C:cytosol"/>
    <property type="evidence" value="ECO:0007669"/>
    <property type="project" value="TreeGrafter"/>
</dbReference>
<dbReference type="GO" id="GO:0000287">
    <property type="term" value="F:magnesium ion binding"/>
    <property type="evidence" value="ECO:0007669"/>
    <property type="project" value="UniProtKB-UniRule"/>
</dbReference>
<dbReference type="GO" id="GO:0008966">
    <property type="term" value="F:phosphoglucosamine mutase activity"/>
    <property type="evidence" value="ECO:0007669"/>
    <property type="project" value="UniProtKB-UniRule"/>
</dbReference>
<dbReference type="GO" id="GO:0004615">
    <property type="term" value="F:phosphomannomutase activity"/>
    <property type="evidence" value="ECO:0007669"/>
    <property type="project" value="TreeGrafter"/>
</dbReference>
<dbReference type="GO" id="GO:0005975">
    <property type="term" value="P:carbohydrate metabolic process"/>
    <property type="evidence" value="ECO:0007669"/>
    <property type="project" value="InterPro"/>
</dbReference>
<dbReference type="GO" id="GO:0009252">
    <property type="term" value="P:peptidoglycan biosynthetic process"/>
    <property type="evidence" value="ECO:0007669"/>
    <property type="project" value="TreeGrafter"/>
</dbReference>
<dbReference type="GO" id="GO:0006048">
    <property type="term" value="P:UDP-N-acetylglucosamine biosynthetic process"/>
    <property type="evidence" value="ECO:0007669"/>
    <property type="project" value="TreeGrafter"/>
</dbReference>
<dbReference type="CDD" id="cd05802">
    <property type="entry name" value="GlmM"/>
    <property type="match status" value="1"/>
</dbReference>
<dbReference type="FunFam" id="3.30.310.50:FF:000001">
    <property type="entry name" value="Phosphoglucosamine mutase"/>
    <property type="match status" value="1"/>
</dbReference>
<dbReference type="FunFam" id="3.40.120.10:FF:000001">
    <property type="entry name" value="Phosphoglucosamine mutase"/>
    <property type="match status" value="1"/>
</dbReference>
<dbReference type="FunFam" id="3.40.120.10:FF:000003">
    <property type="entry name" value="Phosphoglucosamine mutase"/>
    <property type="match status" value="1"/>
</dbReference>
<dbReference type="Gene3D" id="3.40.120.10">
    <property type="entry name" value="Alpha-D-Glucose-1,6-Bisphosphate, subunit A, domain 3"/>
    <property type="match status" value="3"/>
</dbReference>
<dbReference type="Gene3D" id="3.30.310.50">
    <property type="entry name" value="Alpha-D-phosphohexomutase, C-terminal domain"/>
    <property type="match status" value="1"/>
</dbReference>
<dbReference type="HAMAP" id="MF_01554_B">
    <property type="entry name" value="GlmM_B"/>
    <property type="match status" value="1"/>
</dbReference>
<dbReference type="InterPro" id="IPR005844">
    <property type="entry name" value="A-D-PHexomutase_a/b/a-I"/>
</dbReference>
<dbReference type="InterPro" id="IPR016055">
    <property type="entry name" value="A-D-PHexomutase_a/b/a-I/II/III"/>
</dbReference>
<dbReference type="InterPro" id="IPR005845">
    <property type="entry name" value="A-D-PHexomutase_a/b/a-II"/>
</dbReference>
<dbReference type="InterPro" id="IPR005846">
    <property type="entry name" value="A-D-PHexomutase_a/b/a-III"/>
</dbReference>
<dbReference type="InterPro" id="IPR005843">
    <property type="entry name" value="A-D-PHexomutase_C"/>
</dbReference>
<dbReference type="InterPro" id="IPR036900">
    <property type="entry name" value="A-D-PHexomutase_C_sf"/>
</dbReference>
<dbReference type="InterPro" id="IPR005841">
    <property type="entry name" value="Alpha-D-phosphohexomutase_SF"/>
</dbReference>
<dbReference type="InterPro" id="IPR006352">
    <property type="entry name" value="GlmM_bact"/>
</dbReference>
<dbReference type="InterPro" id="IPR050060">
    <property type="entry name" value="Phosphoglucosamine_mutase"/>
</dbReference>
<dbReference type="NCBIfam" id="TIGR01455">
    <property type="entry name" value="glmM"/>
    <property type="match status" value="1"/>
</dbReference>
<dbReference type="NCBIfam" id="NF008139">
    <property type="entry name" value="PRK10887.1"/>
    <property type="match status" value="1"/>
</dbReference>
<dbReference type="PANTHER" id="PTHR42946:SF1">
    <property type="entry name" value="PHOSPHOGLUCOMUTASE (ALPHA-D-GLUCOSE-1,6-BISPHOSPHATE-DEPENDENT)"/>
    <property type="match status" value="1"/>
</dbReference>
<dbReference type="PANTHER" id="PTHR42946">
    <property type="entry name" value="PHOSPHOHEXOSE MUTASE"/>
    <property type="match status" value="1"/>
</dbReference>
<dbReference type="Pfam" id="PF02878">
    <property type="entry name" value="PGM_PMM_I"/>
    <property type="match status" value="1"/>
</dbReference>
<dbReference type="Pfam" id="PF02879">
    <property type="entry name" value="PGM_PMM_II"/>
    <property type="match status" value="1"/>
</dbReference>
<dbReference type="Pfam" id="PF02880">
    <property type="entry name" value="PGM_PMM_III"/>
    <property type="match status" value="1"/>
</dbReference>
<dbReference type="Pfam" id="PF00408">
    <property type="entry name" value="PGM_PMM_IV"/>
    <property type="match status" value="1"/>
</dbReference>
<dbReference type="PRINTS" id="PR00509">
    <property type="entry name" value="PGMPMM"/>
</dbReference>
<dbReference type="SUPFAM" id="SSF55957">
    <property type="entry name" value="Phosphoglucomutase, C-terminal domain"/>
    <property type="match status" value="1"/>
</dbReference>
<dbReference type="SUPFAM" id="SSF53738">
    <property type="entry name" value="Phosphoglucomutase, first 3 domains"/>
    <property type="match status" value="3"/>
</dbReference>
<protein>
    <recommendedName>
        <fullName evidence="1">Phosphoglucosamine mutase</fullName>
        <ecNumber evidence="1">5.4.2.10</ecNumber>
    </recommendedName>
</protein>
<keyword id="KW-0413">Isomerase</keyword>
<keyword id="KW-0460">Magnesium</keyword>
<keyword id="KW-0479">Metal-binding</keyword>
<keyword id="KW-0597">Phosphoprotein</keyword>
<keyword id="KW-1185">Reference proteome</keyword>
<proteinExistence type="inferred from homology"/>
<feature type="chain" id="PRO_0000301371" description="Phosphoglucosamine mutase">
    <location>
        <begin position="1"/>
        <end position="450"/>
    </location>
</feature>
<feature type="active site" description="Phosphoserine intermediate" evidence="1">
    <location>
        <position position="101"/>
    </location>
</feature>
<feature type="binding site" description="via phosphate group" evidence="1">
    <location>
        <position position="101"/>
    </location>
    <ligand>
        <name>Mg(2+)</name>
        <dbReference type="ChEBI" id="CHEBI:18420"/>
    </ligand>
</feature>
<feature type="binding site" evidence="1">
    <location>
        <position position="242"/>
    </location>
    <ligand>
        <name>Mg(2+)</name>
        <dbReference type="ChEBI" id="CHEBI:18420"/>
    </ligand>
</feature>
<feature type="binding site" evidence="1">
    <location>
        <position position="244"/>
    </location>
    <ligand>
        <name>Mg(2+)</name>
        <dbReference type="ChEBI" id="CHEBI:18420"/>
    </ligand>
</feature>
<feature type="binding site" evidence="1">
    <location>
        <position position="246"/>
    </location>
    <ligand>
        <name>Mg(2+)</name>
        <dbReference type="ChEBI" id="CHEBI:18420"/>
    </ligand>
</feature>
<feature type="modified residue" description="Phosphoserine" evidence="1">
    <location>
        <position position="101"/>
    </location>
</feature>
<organism>
    <name type="scientific">Rhodopseudomonas palustris (strain HaA2)</name>
    <dbReference type="NCBI Taxonomy" id="316058"/>
    <lineage>
        <taxon>Bacteria</taxon>
        <taxon>Pseudomonadati</taxon>
        <taxon>Pseudomonadota</taxon>
        <taxon>Alphaproteobacteria</taxon>
        <taxon>Hyphomicrobiales</taxon>
        <taxon>Nitrobacteraceae</taxon>
        <taxon>Rhodopseudomonas</taxon>
    </lineage>
</organism>